<proteinExistence type="inferred from homology"/>
<reference key="1">
    <citation type="journal article" date="2008" name="BMC Genomics">
        <title>Genomics of an extreme psychrophile, Psychromonas ingrahamii.</title>
        <authorList>
            <person name="Riley M."/>
            <person name="Staley J.T."/>
            <person name="Danchin A."/>
            <person name="Wang T.Z."/>
            <person name="Brettin T.S."/>
            <person name="Hauser L.J."/>
            <person name="Land M.L."/>
            <person name="Thompson L.S."/>
        </authorList>
    </citation>
    <scope>NUCLEOTIDE SEQUENCE [LARGE SCALE GENOMIC DNA]</scope>
    <source>
        <strain>DSM 17664 / CCUG 51855 / 37</strain>
    </source>
</reference>
<evidence type="ECO:0000255" key="1">
    <source>
        <dbReference type="HAMAP-Rule" id="MF_00191"/>
    </source>
</evidence>
<organism>
    <name type="scientific">Psychromonas ingrahamii (strain DSM 17664 / CCUG 51855 / 37)</name>
    <dbReference type="NCBI Taxonomy" id="357804"/>
    <lineage>
        <taxon>Bacteria</taxon>
        <taxon>Pseudomonadati</taxon>
        <taxon>Pseudomonadota</taxon>
        <taxon>Gammaproteobacteria</taxon>
        <taxon>Alteromonadales</taxon>
        <taxon>Psychromonadaceae</taxon>
        <taxon>Psychromonas</taxon>
    </lineage>
</organism>
<comment type="function">
    <text evidence="1">Catalyzes the conversion of 1-hydroxy-2-methyl-2-(E)-butenyl 4-diphosphate (HMBPP) into a mixture of isopentenyl diphosphate (IPP) and dimethylallyl diphosphate (DMAPP). Acts in the terminal step of the DOXP/MEP pathway for isoprenoid precursor biosynthesis.</text>
</comment>
<comment type="catalytic activity">
    <reaction evidence="1">
        <text>isopentenyl diphosphate + 2 oxidized [2Fe-2S]-[ferredoxin] + H2O = (2E)-4-hydroxy-3-methylbut-2-enyl diphosphate + 2 reduced [2Fe-2S]-[ferredoxin] + 2 H(+)</text>
        <dbReference type="Rhea" id="RHEA:24488"/>
        <dbReference type="Rhea" id="RHEA-COMP:10000"/>
        <dbReference type="Rhea" id="RHEA-COMP:10001"/>
        <dbReference type="ChEBI" id="CHEBI:15377"/>
        <dbReference type="ChEBI" id="CHEBI:15378"/>
        <dbReference type="ChEBI" id="CHEBI:33737"/>
        <dbReference type="ChEBI" id="CHEBI:33738"/>
        <dbReference type="ChEBI" id="CHEBI:128753"/>
        <dbReference type="ChEBI" id="CHEBI:128769"/>
        <dbReference type="EC" id="1.17.7.4"/>
    </reaction>
</comment>
<comment type="catalytic activity">
    <reaction evidence="1">
        <text>dimethylallyl diphosphate + 2 oxidized [2Fe-2S]-[ferredoxin] + H2O = (2E)-4-hydroxy-3-methylbut-2-enyl diphosphate + 2 reduced [2Fe-2S]-[ferredoxin] + 2 H(+)</text>
        <dbReference type="Rhea" id="RHEA:24825"/>
        <dbReference type="Rhea" id="RHEA-COMP:10000"/>
        <dbReference type="Rhea" id="RHEA-COMP:10001"/>
        <dbReference type="ChEBI" id="CHEBI:15377"/>
        <dbReference type="ChEBI" id="CHEBI:15378"/>
        <dbReference type="ChEBI" id="CHEBI:33737"/>
        <dbReference type="ChEBI" id="CHEBI:33738"/>
        <dbReference type="ChEBI" id="CHEBI:57623"/>
        <dbReference type="ChEBI" id="CHEBI:128753"/>
        <dbReference type="EC" id="1.17.7.4"/>
    </reaction>
</comment>
<comment type="cofactor">
    <cofactor evidence="1">
        <name>[4Fe-4S] cluster</name>
        <dbReference type="ChEBI" id="CHEBI:49883"/>
    </cofactor>
    <text evidence="1">Binds 1 [4Fe-4S] cluster per subunit.</text>
</comment>
<comment type="pathway">
    <text evidence="1">Isoprenoid biosynthesis; dimethylallyl diphosphate biosynthesis; dimethylallyl diphosphate from (2E)-4-hydroxy-3-methylbutenyl diphosphate: step 1/1.</text>
</comment>
<comment type="pathway">
    <text evidence="1">Isoprenoid biosynthesis; isopentenyl diphosphate biosynthesis via DXP pathway; isopentenyl diphosphate from 1-deoxy-D-xylulose 5-phosphate: step 6/6.</text>
</comment>
<comment type="similarity">
    <text evidence="1">Belongs to the IspH family.</text>
</comment>
<dbReference type="EC" id="1.17.7.4" evidence="1"/>
<dbReference type="EMBL" id="CP000510">
    <property type="protein sequence ID" value="ABM04955.1"/>
    <property type="molecule type" value="Genomic_DNA"/>
</dbReference>
<dbReference type="RefSeq" id="WP_011771507.1">
    <property type="nucleotide sequence ID" value="NC_008709.1"/>
</dbReference>
<dbReference type="SMR" id="A1SZP0"/>
<dbReference type="STRING" id="357804.Ping_3268"/>
<dbReference type="KEGG" id="pin:Ping_3268"/>
<dbReference type="eggNOG" id="COG0761">
    <property type="taxonomic scope" value="Bacteria"/>
</dbReference>
<dbReference type="HOGENOM" id="CLU_027486_1_0_6"/>
<dbReference type="OrthoDB" id="9804068at2"/>
<dbReference type="UniPathway" id="UPA00056">
    <property type="reaction ID" value="UER00097"/>
</dbReference>
<dbReference type="UniPathway" id="UPA00059">
    <property type="reaction ID" value="UER00105"/>
</dbReference>
<dbReference type="Proteomes" id="UP000000639">
    <property type="component" value="Chromosome"/>
</dbReference>
<dbReference type="GO" id="GO:0051539">
    <property type="term" value="F:4 iron, 4 sulfur cluster binding"/>
    <property type="evidence" value="ECO:0007669"/>
    <property type="project" value="UniProtKB-UniRule"/>
</dbReference>
<dbReference type="GO" id="GO:0051745">
    <property type="term" value="F:4-hydroxy-3-methylbut-2-enyl diphosphate reductase activity"/>
    <property type="evidence" value="ECO:0007669"/>
    <property type="project" value="UniProtKB-UniRule"/>
</dbReference>
<dbReference type="GO" id="GO:0046872">
    <property type="term" value="F:metal ion binding"/>
    <property type="evidence" value="ECO:0007669"/>
    <property type="project" value="UniProtKB-KW"/>
</dbReference>
<dbReference type="GO" id="GO:0050992">
    <property type="term" value="P:dimethylallyl diphosphate biosynthetic process"/>
    <property type="evidence" value="ECO:0007669"/>
    <property type="project" value="UniProtKB-UniRule"/>
</dbReference>
<dbReference type="GO" id="GO:0019288">
    <property type="term" value="P:isopentenyl diphosphate biosynthetic process, methylerythritol 4-phosphate pathway"/>
    <property type="evidence" value="ECO:0007669"/>
    <property type="project" value="UniProtKB-UniRule"/>
</dbReference>
<dbReference type="GO" id="GO:0016114">
    <property type="term" value="P:terpenoid biosynthetic process"/>
    <property type="evidence" value="ECO:0007669"/>
    <property type="project" value="UniProtKB-UniRule"/>
</dbReference>
<dbReference type="CDD" id="cd13944">
    <property type="entry name" value="lytB_ispH"/>
    <property type="match status" value="1"/>
</dbReference>
<dbReference type="Gene3D" id="3.40.50.11270">
    <property type="match status" value="1"/>
</dbReference>
<dbReference type="Gene3D" id="3.40.1010.20">
    <property type="entry name" value="4-hydroxy-3-methylbut-2-enyl diphosphate reductase, catalytic domain"/>
    <property type="match status" value="2"/>
</dbReference>
<dbReference type="HAMAP" id="MF_00191">
    <property type="entry name" value="IspH"/>
    <property type="match status" value="1"/>
</dbReference>
<dbReference type="InterPro" id="IPR003451">
    <property type="entry name" value="LytB/IspH"/>
</dbReference>
<dbReference type="NCBIfam" id="TIGR00216">
    <property type="entry name" value="ispH_lytB"/>
    <property type="match status" value="1"/>
</dbReference>
<dbReference type="NCBIfam" id="NF002188">
    <property type="entry name" value="PRK01045.1-2"/>
    <property type="match status" value="1"/>
</dbReference>
<dbReference type="NCBIfam" id="NF002190">
    <property type="entry name" value="PRK01045.1-4"/>
    <property type="match status" value="1"/>
</dbReference>
<dbReference type="PANTHER" id="PTHR30426">
    <property type="entry name" value="4-HYDROXY-3-METHYLBUT-2-ENYL DIPHOSPHATE REDUCTASE"/>
    <property type="match status" value="1"/>
</dbReference>
<dbReference type="PANTHER" id="PTHR30426:SF0">
    <property type="entry name" value="4-HYDROXY-3-METHYLBUT-2-ENYL DIPHOSPHATE REDUCTASE"/>
    <property type="match status" value="1"/>
</dbReference>
<dbReference type="Pfam" id="PF02401">
    <property type="entry name" value="LYTB"/>
    <property type="match status" value="1"/>
</dbReference>
<gene>
    <name evidence="1" type="primary">ispH</name>
    <name type="ordered locus">Ping_3268</name>
</gene>
<name>ISPH_PSYIN</name>
<accession>A1SZP0</accession>
<keyword id="KW-0004">4Fe-4S</keyword>
<keyword id="KW-0408">Iron</keyword>
<keyword id="KW-0411">Iron-sulfur</keyword>
<keyword id="KW-0414">Isoprene biosynthesis</keyword>
<keyword id="KW-0479">Metal-binding</keyword>
<keyword id="KW-0560">Oxidoreductase</keyword>
<keyword id="KW-1185">Reference proteome</keyword>
<protein>
    <recommendedName>
        <fullName evidence="1">4-hydroxy-3-methylbut-2-enyl diphosphate reductase</fullName>
        <shortName evidence="1">HMBPP reductase</shortName>
        <ecNumber evidence="1">1.17.7.4</ecNumber>
    </recommendedName>
</protein>
<feature type="chain" id="PRO_1000021169" description="4-hydroxy-3-methylbut-2-enyl diphosphate reductase">
    <location>
        <begin position="1"/>
        <end position="314"/>
    </location>
</feature>
<feature type="active site" description="Proton donor" evidence="1">
    <location>
        <position position="126"/>
    </location>
</feature>
<feature type="binding site" evidence="1">
    <location>
        <position position="12"/>
    </location>
    <ligand>
        <name>[4Fe-4S] cluster</name>
        <dbReference type="ChEBI" id="CHEBI:49883"/>
    </ligand>
</feature>
<feature type="binding site" evidence="1">
    <location>
        <position position="41"/>
    </location>
    <ligand>
        <name>(2E)-4-hydroxy-3-methylbut-2-enyl diphosphate</name>
        <dbReference type="ChEBI" id="CHEBI:128753"/>
    </ligand>
</feature>
<feature type="binding site" evidence="1">
    <location>
        <position position="41"/>
    </location>
    <ligand>
        <name>dimethylallyl diphosphate</name>
        <dbReference type="ChEBI" id="CHEBI:57623"/>
    </ligand>
</feature>
<feature type="binding site" evidence="1">
    <location>
        <position position="41"/>
    </location>
    <ligand>
        <name>isopentenyl diphosphate</name>
        <dbReference type="ChEBI" id="CHEBI:128769"/>
    </ligand>
</feature>
<feature type="binding site" evidence="1">
    <location>
        <position position="74"/>
    </location>
    <ligand>
        <name>(2E)-4-hydroxy-3-methylbut-2-enyl diphosphate</name>
        <dbReference type="ChEBI" id="CHEBI:128753"/>
    </ligand>
</feature>
<feature type="binding site" evidence="1">
    <location>
        <position position="74"/>
    </location>
    <ligand>
        <name>dimethylallyl diphosphate</name>
        <dbReference type="ChEBI" id="CHEBI:57623"/>
    </ligand>
</feature>
<feature type="binding site" evidence="1">
    <location>
        <position position="74"/>
    </location>
    <ligand>
        <name>isopentenyl diphosphate</name>
        <dbReference type="ChEBI" id="CHEBI:128769"/>
    </ligand>
</feature>
<feature type="binding site" evidence="1">
    <location>
        <position position="96"/>
    </location>
    <ligand>
        <name>[4Fe-4S] cluster</name>
        <dbReference type="ChEBI" id="CHEBI:49883"/>
    </ligand>
</feature>
<feature type="binding site" evidence="1">
    <location>
        <position position="124"/>
    </location>
    <ligand>
        <name>(2E)-4-hydroxy-3-methylbut-2-enyl diphosphate</name>
        <dbReference type="ChEBI" id="CHEBI:128753"/>
    </ligand>
</feature>
<feature type="binding site" evidence="1">
    <location>
        <position position="124"/>
    </location>
    <ligand>
        <name>dimethylallyl diphosphate</name>
        <dbReference type="ChEBI" id="CHEBI:57623"/>
    </ligand>
</feature>
<feature type="binding site" evidence="1">
    <location>
        <position position="124"/>
    </location>
    <ligand>
        <name>isopentenyl diphosphate</name>
        <dbReference type="ChEBI" id="CHEBI:128769"/>
    </ligand>
</feature>
<feature type="binding site" evidence="1">
    <location>
        <position position="167"/>
    </location>
    <ligand>
        <name>(2E)-4-hydroxy-3-methylbut-2-enyl diphosphate</name>
        <dbReference type="ChEBI" id="CHEBI:128753"/>
    </ligand>
</feature>
<feature type="binding site" evidence="1">
    <location>
        <position position="197"/>
    </location>
    <ligand>
        <name>[4Fe-4S] cluster</name>
        <dbReference type="ChEBI" id="CHEBI:49883"/>
    </ligand>
</feature>
<feature type="binding site" evidence="1">
    <location>
        <position position="225"/>
    </location>
    <ligand>
        <name>(2E)-4-hydroxy-3-methylbut-2-enyl diphosphate</name>
        <dbReference type="ChEBI" id="CHEBI:128753"/>
    </ligand>
</feature>
<feature type="binding site" evidence="1">
    <location>
        <position position="225"/>
    </location>
    <ligand>
        <name>dimethylallyl diphosphate</name>
        <dbReference type="ChEBI" id="CHEBI:57623"/>
    </ligand>
</feature>
<feature type="binding site" evidence="1">
    <location>
        <position position="225"/>
    </location>
    <ligand>
        <name>isopentenyl diphosphate</name>
        <dbReference type="ChEBI" id="CHEBI:128769"/>
    </ligand>
</feature>
<feature type="binding site" evidence="1">
    <location>
        <position position="226"/>
    </location>
    <ligand>
        <name>(2E)-4-hydroxy-3-methylbut-2-enyl diphosphate</name>
        <dbReference type="ChEBI" id="CHEBI:128753"/>
    </ligand>
</feature>
<feature type="binding site" evidence="1">
    <location>
        <position position="226"/>
    </location>
    <ligand>
        <name>dimethylallyl diphosphate</name>
        <dbReference type="ChEBI" id="CHEBI:57623"/>
    </ligand>
</feature>
<feature type="binding site" evidence="1">
    <location>
        <position position="226"/>
    </location>
    <ligand>
        <name>isopentenyl diphosphate</name>
        <dbReference type="ChEBI" id="CHEBI:128769"/>
    </ligand>
</feature>
<feature type="binding site" evidence="1">
    <location>
        <position position="227"/>
    </location>
    <ligand>
        <name>(2E)-4-hydroxy-3-methylbut-2-enyl diphosphate</name>
        <dbReference type="ChEBI" id="CHEBI:128753"/>
    </ligand>
</feature>
<feature type="binding site" evidence="1">
    <location>
        <position position="227"/>
    </location>
    <ligand>
        <name>dimethylallyl diphosphate</name>
        <dbReference type="ChEBI" id="CHEBI:57623"/>
    </ligand>
</feature>
<feature type="binding site" evidence="1">
    <location>
        <position position="227"/>
    </location>
    <ligand>
        <name>isopentenyl diphosphate</name>
        <dbReference type="ChEBI" id="CHEBI:128769"/>
    </ligand>
</feature>
<feature type="binding site" evidence="1">
    <location>
        <position position="269"/>
    </location>
    <ligand>
        <name>(2E)-4-hydroxy-3-methylbut-2-enyl diphosphate</name>
        <dbReference type="ChEBI" id="CHEBI:128753"/>
    </ligand>
</feature>
<feature type="binding site" evidence="1">
    <location>
        <position position="269"/>
    </location>
    <ligand>
        <name>dimethylallyl diphosphate</name>
        <dbReference type="ChEBI" id="CHEBI:57623"/>
    </ligand>
</feature>
<feature type="binding site" evidence="1">
    <location>
        <position position="269"/>
    </location>
    <ligand>
        <name>isopentenyl diphosphate</name>
        <dbReference type="ChEBI" id="CHEBI:128769"/>
    </ligand>
</feature>
<sequence length="314" mass="34607">MEIILANPRGFCAGVHRAISIVDRALDIFTPPIYVRHEVVHNQYVVDDLRARGAVFVEELDEVPENSIVIFSAHGVAQSVRAEAKRRDLKIFDATCPLVTKVHMEVTRASRRGQECILIGHQGHPEVVGTMGQYDNPQGGIYLIESPEDIKKLEVKNPNSLCFSSQTTLSVDDTANIIKALREKFPKIDGPRKDDICYATQNRQDAVKALAERSDLVLVVGSTNSSNSNRLQEKASCVGVNAYLIDSEKDIKTEWLENVKVVGVTAGASAPEVLVKEVIARLKKLGGTVVTENLGVEENIIFEVPAELRIKQID</sequence>